<geneLocation type="plasmid">
    <name>pFK99</name>
</geneLocation>
<organism>
    <name type="scientific">Escherichia coli</name>
    <dbReference type="NCBI Taxonomy" id="562"/>
    <lineage>
        <taxon>Bacteria</taxon>
        <taxon>Pseudomonadati</taxon>
        <taxon>Pseudomonadota</taxon>
        <taxon>Gammaproteobacteria</taxon>
        <taxon>Enterobacterales</taxon>
        <taxon>Enterobacteriaceae</taxon>
        <taxon>Escherichia</taxon>
    </lineage>
</organism>
<feature type="signal peptide">
    <location>
        <begin position="1"/>
        <end position="22"/>
    </location>
</feature>
<feature type="chain" id="PRO_0000009203" description="K99 fimbrial protein">
    <location>
        <begin position="23"/>
        <end position="181"/>
    </location>
</feature>
<feature type="site" description="Required for receptor binding">
    <location>
        <position position="154"/>
    </location>
</feature>
<feature type="site" description="Required for receptor binding">
    <location>
        <position position="158"/>
    </location>
</feature>
<feature type="site" description="Required for stability and transport">
    <location>
        <position position="180"/>
    </location>
</feature>
<feature type="disulfide bond" evidence="1">
    <location>
        <begin position="38"/>
        <end position="79"/>
    </location>
</feature>
<sequence>MKKTLLAIILGGMAFATTNASANTGTINFNGKITSATCTIDPEVNGNRTSTIDLGQAAISGHGTVVDFKLKPAPGSNDCLAKTNARIDWSGSMNSLGFNNTASGNTAAKGYHMTLRATNVGNGSGGANINTSFTTAEYTHTSAIQSFNYSAQLKKDDRAPSNGGYKAGVFTTSASFLVTYM</sequence>
<comment type="function">
    <text>Fimbriae (also called pili), polar filaments radiating from the surface of the bacterium to a length of 0.5-1.5 micrometers and numbering 100-300 per cell, enable bacteria to colonize the epithelium of specific host organs.</text>
</comment>
<comment type="function">
    <text>FanC is the main component of the K99 fimbriae.</text>
</comment>
<comment type="subcellular location">
    <subcellularLocation>
        <location>Fimbrium</location>
    </subcellularLocation>
</comment>
<comment type="similarity">
    <text evidence="1">Belongs to the fimbrial protein family.</text>
</comment>
<evidence type="ECO:0000305" key="1"/>
<protein>
    <recommendedName>
        <fullName>K99 fimbrial protein</fullName>
    </recommendedName>
</protein>
<gene>
    <name type="primary">fanC</name>
</gene>
<proteinExistence type="inferred from homology"/>
<name>FANC_ECOLX</name>
<reference key="1">
    <citation type="journal article" date="1984" name="FEMS Microbiol. Lett.">
        <title>The nucleotide sequence of the gene encoding the K99 subunit of enterotoxigenic Escherichia coli.</title>
        <authorList>
            <person name="Roosendaal B."/>
            <person name="Gaastra W."/>
            <person name="de Graaf F.K."/>
        </authorList>
    </citation>
    <scope>NUCLEOTIDE SEQUENCE [GENOMIC DNA]</scope>
</reference>
<reference key="2">
    <citation type="journal article" date="1990" name="FEMS Microbiol. Lett.">
        <title>The penultimate tyrosine residue of the K99 fibrillar subunit is essential for stability of the protein and its interaction with the periplasmic carrier protein.</title>
        <authorList>
            <person name="Simons B.L."/>
            <person name="Rathman P."/>
            <person name="Maij C.R."/>
            <person name="Oudega B."/>
            <person name="de Graaf F.K."/>
        </authorList>
    </citation>
    <scope>IMPORTANCE OF RESIDUE 180</scope>
</reference>
<reference key="3">
    <citation type="journal article" date="1987" name="EMBO J.">
        <title>The role of lysine-132 and arginine-136 in the receptor-binding domain of the K99 fibrillar subunit.</title>
        <authorList>
            <person name="Jacobs A.A.C."/>
            <person name="Simons L.H."/>
            <person name="de Graaf F.K."/>
        </authorList>
    </citation>
    <scope>IMPORTANCE OF RESIDUES 154 AND 158</scope>
</reference>
<dbReference type="EMBL" id="M35282">
    <property type="protein sequence ID" value="AAA24037.1"/>
    <property type="molecule type" value="Genomic_DNA"/>
</dbReference>
<dbReference type="PIR" id="I41321">
    <property type="entry name" value="I41321"/>
</dbReference>
<dbReference type="SMR" id="P18103"/>
<dbReference type="GO" id="GO:0009289">
    <property type="term" value="C:pilus"/>
    <property type="evidence" value="ECO:0007669"/>
    <property type="project" value="UniProtKB-SubCell"/>
</dbReference>
<dbReference type="GO" id="GO:0007155">
    <property type="term" value="P:cell adhesion"/>
    <property type="evidence" value="ECO:0007669"/>
    <property type="project" value="InterPro"/>
</dbReference>
<dbReference type="Gene3D" id="2.60.40.1090">
    <property type="entry name" value="Fimbrial-type adhesion domain"/>
    <property type="match status" value="1"/>
</dbReference>
<dbReference type="InterPro" id="IPR036937">
    <property type="entry name" value="Adhesion_dom_fimbrial_sf"/>
</dbReference>
<dbReference type="InterPro" id="IPR008966">
    <property type="entry name" value="Adhesion_dom_sf"/>
</dbReference>
<dbReference type="SUPFAM" id="SSF49401">
    <property type="entry name" value="Bacterial adhesins"/>
    <property type="match status" value="1"/>
</dbReference>
<keyword id="KW-1015">Disulfide bond</keyword>
<keyword id="KW-0281">Fimbrium</keyword>
<keyword id="KW-0614">Plasmid</keyword>
<keyword id="KW-0732">Signal</keyword>
<accession>P18103</accession>